<dbReference type="EC" id="4.3.2.1" evidence="1"/>
<dbReference type="EMBL" id="AM260525">
    <property type="protein sequence ID" value="CAK02545.1"/>
    <property type="molecule type" value="Genomic_DNA"/>
</dbReference>
<dbReference type="RefSeq" id="WP_012232579.1">
    <property type="nucleotide sequence ID" value="NC_010161.1"/>
</dbReference>
<dbReference type="SMR" id="A9IZG7"/>
<dbReference type="KEGG" id="btr:BT_2593"/>
<dbReference type="eggNOG" id="COG0165">
    <property type="taxonomic scope" value="Bacteria"/>
</dbReference>
<dbReference type="HOGENOM" id="CLU_027272_2_3_5"/>
<dbReference type="UniPathway" id="UPA00068">
    <property type="reaction ID" value="UER00114"/>
</dbReference>
<dbReference type="Proteomes" id="UP000001592">
    <property type="component" value="Chromosome"/>
</dbReference>
<dbReference type="GO" id="GO:0005829">
    <property type="term" value="C:cytosol"/>
    <property type="evidence" value="ECO:0007669"/>
    <property type="project" value="TreeGrafter"/>
</dbReference>
<dbReference type="GO" id="GO:0004056">
    <property type="term" value="F:argininosuccinate lyase activity"/>
    <property type="evidence" value="ECO:0007669"/>
    <property type="project" value="UniProtKB-UniRule"/>
</dbReference>
<dbReference type="GO" id="GO:0042450">
    <property type="term" value="P:arginine biosynthetic process via ornithine"/>
    <property type="evidence" value="ECO:0007669"/>
    <property type="project" value="InterPro"/>
</dbReference>
<dbReference type="GO" id="GO:0006526">
    <property type="term" value="P:L-arginine biosynthetic process"/>
    <property type="evidence" value="ECO:0007669"/>
    <property type="project" value="UniProtKB-UniRule"/>
</dbReference>
<dbReference type="CDD" id="cd01359">
    <property type="entry name" value="Argininosuccinate_lyase"/>
    <property type="match status" value="1"/>
</dbReference>
<dbReference type="FunFam" id="1.10.275.10:FF:000002">
    <property type="entry name" value="Argininosuccinate lyase"/>
    <property type="match status" value="1"/>
</dbReference>
<dbReference type="FunFam" id="1.10.40.30:FF:000001">
    <property type="entry name" value="Argininosuccinate lyase"/>
    <property type="match status" value="1"/>
</dbReference>
<dbReference type="FunFam" id="1.20.200.10:FF:000015">
    <property type="entry name" value="argininosuccinate lyase isoform X2"/>
    <property type="match status" value="1"/>
</dbReference>
<dbReference type="Gene3D" id="1.10.40.30">
    <property type="entry name" value="Fumarase/aspartase (C-terminal domain)"/>
    <property type="match status" value="1"/>
</dbReference>
<dbReference type="Gene3D" id="1.20.200.10">
    <property type="entry name" value="Fumarase/aspartase (Central domain)"/>
    <property type="match status" value="1"/>
</dbReference>
<dbReference type="Gene3D" id="1.10.275.10">
    <property type="entry name" value="Fumarase/aspartase (N-terminal domain)"/>
    <property type="match status" value="1"/>
</dbReference>
<dbReference type="HAMAP" id="MF_00006">
    <property type="entry name" value="Arg_succ_lyase"/>
    <property type="match status" value="1"/>
</dbReference>
<dbReference type="InterPro" id="IPR029419">
    <property type="entry name" value="Arg_succ_lyase_C"/>
</dbReference>
<dbReference type="InterPro" id="IPR009049">
    <property type="entry name" value="Argininosuccinate_lyase"/>
</dbReference>
<dbReference type="InterPro" id="IPR024083">
    <property type="entry name" value="Fumarase/histidase_N"/>
</dbReference>
<dbReference type="InterPro" id="IPR020557">
    <property type="entry name" value="Fumarate_lyase_CS"/>
</dbReference>
<dbReference type="InterPro" id="IPR000362">
    <property type="entry name" value="Fumarate_lyase_fam"/>
</dbReference>
<dbReference type="InterPro" id="IPR022761">
    <property type="entry name" value="Fumarate_lyase_N"/>
</dbReference>
<dbReference type="InterPro" id="IPR008948">
    <property type="entry name" value="L-Aspartase-like"/>
</dbReference>
<dbReference type="NCBIfam" id="TIGR00838">
    <property type="entry name" value="argH"/>
    <property type="match status" value="1"/>
</dbReference>
<dbReference type="PANTHER" id="PTHR43814">
    <property type="entry name" value="ARGININOSUCCINATE LYASE"/>
    <property type="match status" value="1"/>
</dbReference>
<dbReference type="PANTHER" id="PTHR43814:SF1">
    <property type="entry name" value="ARGININOSUCCINATE LYASE"/>
    <property type="match status" value="1"/>
</dbReference>
<dbReference type="Pfam" id="PF14698">
    <property type="entry name" value="ASL_C2"/>
    <property type="match status" value="1"/>
</dbReference>
<dbReference type="Pfam" id="PF00206">
    <property type="entry name" value="Lyase_1"/>
    <property type="match status" value="1"/>
</dbReference>
<dbReference type="PRINTS" id="PR00145">
    <property type="entry name" value="ARGSUCLYASE"/>
</dbReference>
<dbReference type="PRINTS" id="PR00149">
    <property type="entry name" value="FUMRATELYASE"/>
</dbReference>
<dbReference type="SUPFAM" id="SSF48557">
    <property type="entry name" value="L-aspartase-like"/>
    <property type="match status" value="1"/>
</dbReference>
<dbReference type="PROSITE" id="PS00163">
    <property type="entry name" value="FUMARATE_LYASES"/>
    <property type="match status" value="1"/>
</dbReference>
<feature type="chain" id="PRO_1000073837" description="Argininosuccinate lyase">
    <location>
        <begin position="1"/>
        <end position="466"/>
    </location>
</feature>
<comment type="catalytic activity">
    <reaction evidence="1">
        <text>2-(N(omega)-L-arginino)succinate = fumarate + L-arginine</text>
        <dbReference type="Rhea" id="RHEA:24020"/>
        <dbReference type="ChEBI" id="CHEBI:29806"/>
        <dbReference type="ChEBI" id="CHEBI:32682"/>
        <dbReference type="ChEBI" id="CHEBI:57472"/>
        <dbReference type="EC" id="4.3.2.1"/>
    </reaction>
</comment>
<comment type="pathway">
    <text evidence="1">Amino-acid biosynthesis; L-arginine biosynthesis; L-arginine from L-ornithine and carbamoyl phosphate: step 3/3.</text>
</comment>
<comment type="subcellular location">
    <subcellularLocation>
        <location evidence="1">Cytoplasm</location>
    </subcellularLocation>
</comment>
<comment type="similarity">
    <text evidence="1">Belongs to the lyase 1 family. Argininosuccinate lyase subfamily.</text>
</comment>
<name>ARLY_BART1</name>
<gene>
    <name evidence="1" type="primary">argH</name>
    <name type="ordered locus">BT_2593</name>
</gene>
<proteinExistence type="inferred from homology"/>
<keyword id="KW-0028">Amino-acid biosynthesis</keyword>
<keyword id="KW-0055">Arginine biosynthesis</keyword>
<keyword id="KW-0963">Cytoplasm</keyword>
<keyword id="KW-0456">Lyase</keyword>
<protein>
    <recommendedName>
        <fullName evidence="1">Argininosuccinate lyase</fullName>
        <shortName evidence="1">ASAL</shortName>
        <ecNumber evidence="1">4.3.2.1</ecNumber>
    </recommendedName>
    <alternativeName>
        <fullName evidence="1">Arginosuccinase</fullName>
    </alternativeName>
</protein>
<evidence type="ECO:0000255" key="1">
    <source>
        <dbReference type="HAMAP-Rule" id="MF_00006"/>
    </source>
</evidence>
<accession>A9IZG7</accession>
<sequence>MTDETLKNQMWGGRFIAGPAAVMEEINASIDVDQKLYRQDIEGSLSHAAMLAQTKIILQSDYEKISHGLKIILQEIEEGDFVFSRNLEDIHMNIEARLSALIGPVAGRLHTARSRNDQVAVDFRLWVRETLQKIAQALKQLIKQLLILAEQHVKTYMPGFTHLQLAQPVTLGHYMMAYVEMFGRDLSRMRDASERMNESPLGAAALAGTSFPIDRFMTAQALGFREPTRNSIDSVSDRDFALEFLSAGALCAMHLSRLAEEIILWSSEQFRFIYLSDAFSTGSSIMPQKRNPDAAELVRAKTGRLNGALMGLLTVMKGLPLAYSKDMQEDKEYVFDGALSLELSLAAMTGMIADLEVNKKAMKQAADLGYATATDFADWLVRELGIPFREAHHMTGQAMALAEKKQCRLQDLSLDELQAICPDINATLFDVLTVEKSVESRKSFGGTASSEVLRQIAYWKKRLVSA</sequence>
<organism>
    <name type="scientific">Bartonella tribocorum (strain CIP 105476 / IBS 506)</name>
    <dbReference type="NCBI Taxonomy" id="382640"/>
    <lineage>
        <taxon>Bacteria</taxon>
        <taxon>Pseudomonadati</taxon>
        <taxon>Pseudomonadota</taxon>
        <taxon>Alphaproteobacteria</taxon>
        <taxon>Hyphomicrobiales</taxon>
        <taxon>Bartonellaceae</taxon>
        <taxon>Bartonella</taxon>
    </lineage>
</organism>
<reference key="1">
    <citation type="journal article" date="2007" name="Nat. Genet.">
        <title>Genomic analysis of Bartonella identifies type IV secretion systems as host adaptability factors.</title>
        <authorList>
            <person name="Saenz H.L."/>
            <person name="Engel P."/>
            <person name="Stoeckli M.C."/>
            <person name="Lanz C."/>
            <person name="Raddatz G."/>
            <person name="Vayssier-Taussat M."/>
            <person name="Birtles R."/>
            <person name="Schuster S.C."/>
            <person name="Dehio C."/>
        </authorList>
    </citation>
    <scope>NUCLEOTIDE SEQUENCE [LARGE SCALE GENOMIC DNA]</scope>
    <source>
        <strain>CIP 105476 / IBS 506</strain>
    </source>
</reference>